<accession>Q8YRT9</accession>
<proteinExistence type="inferred from homology"/>
<feature type="chain" id="PRO_0000108566" description="Ribosomal RNA small subunit methyltransferase H">
    <location>
        <begin position="1"/>
        <end position="302"/>
    </location>
</feature>
<feature type="region of interest" description="Disordered" evidence="2">
    <location>
        <begin position="276"/>
        <end position="302"/>
    </location>
</feature>
<feature type="binding site" evidence="1">
    <location>
        <begin position="43"/>
        <end position="45"/>
    </location>
    <ligand>
        <name>S-adenosyl-L-methionine</name>
        <dbReference type="ChEBI" id="CHEBI:59789"/>
    </ligand>
</feature>
<feature type="binding site" evidence="1">
    <location>
        <position position="62"/>
    </location>
    <ligand>
        <name>S-adenosyl-L-methionine</name>
        <dbReference type="ChEBI" id="CHEBI:59789"/>
    </ligand>
</feature>
<feature type="binding site" evidence="1">
    <location>
        <position position="89"/>
    </location>
    <ligand>
        <name>S-adenosyl-L-methionine</name>
        <dbReference type="ChEBI" id="CHEBI:59789"/>
    </ligand>
</feature>
<feature type="binding site" evidence="1">
    <location>
        <position position="105"/>
    </location>
    <ligand>
        <name>S-adenosyl-L-methionine</name>
        <dbReference type="ChEBI" id="CHEBI:59789"/>
    </ligand>
</feature>
<feature type="binding site" evidence="1">
    <location>
        <position position="112"/>
    </location>
    <ligand>
        <name>S-adenosyl-L-methionine</name>
        <dbReference type="ChEBI" id="CHEBI:59789"/>
    </ligand>
</feature>
<organism>
    <name type="scientific">Nostoc sp. (strain PCC 7120 / SAG 25.82 / UTEX 2576)</name>
    <dbReference type="NCBI Taxonomy" id="103690"/>
    <lineage>
        <taxon>Bacteria</taxon>
        <taxon>Bacillati</taxon>
        <taxon>Cyanobacteriota</taxon>
        <taxon>Cyanophyceae</taxon>
        <taxon>Nostocales</taxon>
        <taxon>Nostocaceae</taxon>
        <taxon>Nostoc</taxon>
    </lineage>
</organism>
<dbReference type="EC" id="2.1.1.199" evidence="1"/>
<dbReference type="EMBL" id="BA000019">
    <property type="protein sequence ID" value="BAB75053.1"/>
    <property type="molecule type" value="Genomic_DNA"/>
</dbReference>
<dbReference type="PIR" id="AC2225">
    <property type="entry name" value="AC2225"/>
</dbReference>
<dbReference type="RefSeq" id="WP_010997505.1">
    <property type="nucleotide sequence ID" value="NZ_RSCN01000038.1"/>
</dbReference>
<dbReference type="SMR" id="Q8YRT9"/>
<dbReference type="STRING" id="103690.gene:10495392"/>
<dbReference type="KEGG" id="ana:all3354"/>
<dbReference type="eggNOG" id="COG0275">
    <property type="taxonomic scope" value="Bacteria"/>
</dbReference>
<dbReference type="OrthoDB" id="9806637at2"/>
<dbReference type="Proteomes" id="UP000002483">
    <property type="component" value="Chromosome"/>
</dbReference>
<dbReference type="GO" id="GO:0005737">
    <property type="term" value="C:cytoplasm"/>
    <property type="evidence" value="ECO:0007669"/>
    <property type="project" value="UniProtKB-SubCell"/>
</dbReference>
<dbReference type="GO" id="GO:0071424">
    <property type="term" value="F:rRNA (cytosine-N4-)-methyltransferase activity"/>
    <property type="evidence" value="ECO:0007669"/>
    <property type="project" value="UniProtKB-UniRule"/>
</dbReference>
<dbReference type="GO" id="GO:0070475">
    <property type="term" value="P:rRNA base methylation"/>
    <property type="evidence" value="ECO:0007669"/>
    <property type="project" value="UniProtKB-UniRule"/>
</dbReference>
<dbReference type="CDD" id="cd02440">
    <property type="entry name" value="AdoMet_MTases"/>
    <property type="match status" value="1"/>
</dbReference>
<dbReference type="Gene3D" id="1.10.150.170">
    <property type="entry name" value="Putative methyltransferase TM0872, insert domain"/>
    <property type="match status" value="1"/>
</dbReference>
<dbReference type="Gene3D" id="3.40.50.150">
    <property type="entry name" value="Vaccinia Virus protein VP39"/>
    <property type="match status" value="1"/>
</dbReference>
<dbReference type="HAMAP" id="MF_01007">
    <property type="entry name" value="16SrRNA_methyltr_H"/>
    <property type="match status" value="1"/>
</dbReference>
<dbReference type="InterPro" id="IPR002903">
    <property type="entry name" value="RsmH"/>
</dbReference>
<dbReference type="InterPro" id="IPR023397">
    <property type="entry name" value="SAM-dep_MeTrfase_MraW_recog"/>
</dbReference>
<dbReference type="InterPro" id="IPR029063">
    <property type="entry name" value="SAM-dependent_MTases_sf"/>
</dbReference>
<dbReference type="NCBIfam" id="TIGR00006">
    <property type="entry name" value="16S rRNA (cytosine(1402)-N(4))-methyltransferase RsmH"/>
    <property type="match status" value="1"/>
</dbReference>
<dbReference type="PANTHER" id="PTHR11265:SF0">
    <property type="entry name" value="12S RRNA N4-METHYLCYTIDINE METHYLTRANSFERASE"/>
    <property type="match status" value="1"/>
</dbReference>
<dbReference type="PANTHER" id="PTHR11265">
    <property type="entry name" value="S-ADENOSYL-METHYLTRANSFERASE MRAW"/>
    <property type="match status" value="1"/>
</dbReference>
<dbReference type="Pfam" id="PF01795">
    <property type="entry name" value="Methyltransf_5"/>
    <property type="match status" value="1"/>
</dbReference>
<dbReference type="PIRSF" id="PIRSF004486">
    <property type="entry name" value="MraW"/>
    <property type="match status" value="1"/>
</dbReference>
<dbReference type="SUPFAM" id="SSF81799">
    <property type="entry name" value="Putative methyltransferase TM0872, insert domain"/>
    <property type="match status" value="1"/>
</dbReference>
<dbReference type="SUPFAM" id="SSF53335">
    <property type="entry name" value="S-adenosyl-L-methionine-dependent methyltransferases"/>
    <property type="match status" value="1"/>
</dbReference>
<reference key="1">
    <citation type="journal article" date="2001" name="DNA Res.">
        <title>Complete genomic sequence of the filamentous nitrogen-fixing cyanobacterium Anabaena sp. strain PCC 7120.</title>
        <authorList>
            <person name="Kaneko T."/>
            <person name="Nakamura Y."/>
            <person name="Wolk C.P."/>
            <person name="Kuritz T."/>
            <person name="Sasamoto S."/>
            <person name="Watanabe A."/>
            <person name="Iriguchi M."/>
            <person name="Ishikawa A."/>
            <person name="Kawashima K."/>
            <person name="Kimura T."/>
            <person name="Kishida Y."/>
            <person name="Kohara M."/>
            <person name="Matsumoto M."/>
            <person name="Matsuno A."/>
            <person name="Muraki A."/>
            <person name="Nakazaki N."/>
            <person name="Shimpo S."/>
            <person name="Sugimoto M."/>
            <person name="Takazawa M."/>
            <person name="Yamada M."/>
            <person name="Yasuda M."/>
            <person name="Tabata S."/>
        </authorList>
    </citation>
    <scope>NUCLEOTIDE SEQUENCE [LARGE SCALE GENOMIC DNA]</scope>
    <source>
        <strain>PCC 7120 / SAG 25.82 / UTEX 2576</strain>
    </source>
</reference>
<evidence type="ECO:0000255" key="1">
    <source>
        <dbReference type="HAMAP-Rule" id="MF_01007"/>
    </source>
</evidence>
<evidence type="ECO:0000256" key="2">
    <source>
        <dbReference type="SAM" id="MobiDB-lite"/>
    </source>
</evidence>
<protein>
    <recommendedName>
        <fullName evidence="1">Ribosomal RNA small subunit methyltransferase H</fullName>
        <ecNumber evidence="1">2.1.1.199</ecNumber>
    </recommendedName>
    <alternativeName>
        <fullName evidence="1">16S rRNA m(4)C1402 methyltransferase</fullName>
    </alternativeName>
    <alternativeName>
        <fullName evidence="1">rRNA (cytosine-N(4)-)-methyltransferase RsmH</fullName>
    </alternativeName>
</protein>
<sequence length="302" mass="33612">MTKTPLTIEEPIFSHLPVLPQEVITGLVVRPGGRYLDVTVGGGGHSRLILEAAPDVKLTAVDQDGDALTAAKQELAEFGEQVKFVRSNFAAYDFPSTSFDGVLADLGVSSYHLDTPERGFSFRHQASLDMRMDQRQSLSAADVINDWDEVELANIFFKYGEERLSRRIARRIVEKRPFHTTTELAEAIASSVPPKYRYGRIHPATRVFQALRIVVNDELKSLETFIEKAPKALVPGGRIAIISFHSLEDRLVKHGLRNSPLLKVLTKKPIIATDDEIANNPRSRSAKLRIAEKQAETGDEDN</sequence>
<name>RSMH_NOSS1</name>
<gene>
    <name evidence="1" type="primary">rsmH</name>
    <name type="synonym">mraW</name>
    <name type="ordered locus">all3354</name>
</gene>
<keyword id="KW-0963">Cytoplasm</keyword>
<keyword id="KW-0489">Methyltransferase</keyword>
<keyword id="KW-1185">Reference proteome</keyword>
<keyword id="KW-0698">rRNA processing</keyword>
<keyword id="KW-0949">S-adenosyl-L-methionine</keyword>
<keyword id="KW-0808">Transferase</keyword>
<comment type="function">
    <text evidence="1">Specifically methylates the N4 position of cytidine in position 1402 (C1402) of 16S rRNA.</text>
</comment>
<comment type="catalytic activity">
    <reaction evidence="1">
        <text>cytidine(1402) in 16S rRNA + S-adenosyl-L-methionine = N(4)-methylcytidine(1402) in 16S rRNA + S-adenosyl-L-homocysteine + H(+)</text>
        <dbReference type="Rhea" id="RHEA:42928"/>
        <dbReference type="Rhea" id="RHEA-COMP:10286"/>
        <dbReference type="Rhea" id="RHEA-COMP:10287"/>
        <dbReference type="ChEBI" id="CHEBI:15378"/>
        <dbReference type="ChEBI" id="CHEBI:57856"/>
        <dbReference type="ChEBI" id="CHEBI:59789"/>
        <dbReference type="ChEBI" id="CHEBI:74506"/>
        <dbReference type="ChEBI" id="CHEBI:82748"/>
        <dbReference type="EC" id="2.1.1.199"/>
    </reaction>
</comment>
<comment type="subcellular location">
    <subcellularLocation>
        <location evidence="1">Cytoplasm</location>
    </subcellularLocation>
</comment>
<comment type="similarity">
    <text evidence="1">Belongs to the methyltransferase superfamily. RsmH family.</text>
</comment>